<proteinExistence type="evidence at protein level"/>
<organism>
    <name type="scientific">Arabidopsis thaliana</name>
    <name type="common">Mouse-ear cress</name>
    <dbReference type="NCBI Taxonomy" id="3702"/>
    <lineage>
        <taxon>Eukaryota</taxon>
        <taxon>Viridiplantae</taxon>
        <taxon>Streptophyta</taxon>
        <taxon>Embryophyta</taxon>
        <taxon>Tracheophyta</taxon>
        <taxon>Spermatophyta</taxon>
        <taxon>Magnoliopsida</taxon>
        <taxon>eudicotyledons</taxon>
        <taxon>Gunneridae</taxon>
        <taxon>Pentapetalae</taxon>
        <taxon>rosids</taxon>
        <taxon>malvids</taxon>
        <taxon>Brassicales</taxon>
        <taxon>Brassicaceae</taxon>
        <taxon>Camelineae</taxon>
        <taxon>Arabidopsis</taxon>
    </lineage>
</organism>
<sequence>MSKEAEMSIAVSALFPGFRFSPTDVELISYYLRRKIDGDENSVAVIAEVEIYKFEPWDLPEESKLKSENEWFYFCARGRKYPHGSQSRRATQLGYWKATGKERSVKSGNQVVGTKRTLVFHIGRAPRGERTEWIMHEYCIHGAPQDALVVCRLRKNADFRASSTQKMEDGVVQDDGYVGQRGGLEKEDKSYYESEHQIPNGDIAESSNVVEDQADTDDDCYAEILNDDIIKLDEEALKASQAFRPTNPTHQETISSESSSKRSKCGIKKESTETMNCYALFRIKNVAGTDSSWRFPNPFKIKKDDSQRLMKNVLATTVFLAILFSFFWTVLIARN</sequence>
<dbReference type="EMBL" id="AC006233">
    <property type="protein sequence ID" value="AAD41999.1"/>
    <property type="molecule type" value="Genomic_DNA"/>
</dbReference>
<dbReference type="EMBL" id="CP002685">
    <property type="protein sequence ID" value="AEC07970.1"/>
    <property type="molecule type" value="Genomic_DNA"/>
</dbReference>
<dbReference type="EMBL" id="DQ056544">
    <property type="protein sequence ID" value="AAY78696.1"/>
    <property type="molecule type" value="mRNA"/>
</dbReference>
<dbReference type="EMBL" id="BT028934">
    <property type="protein sequence ID" value="ABI49481.1"/>
    <property type="molecule type" value="mRNA"/>
</dbReference>
<dbReference type="PIR" id="C84671">
    <property type="entry name" value="C84671"/>
</dbReference>
<dbReference type="RefSeq" id="NP_180298.1">
    <property type="nucleotide sequence ID" value="NM_128289.2"/>
</dbReference>
<dbReference type="SMR" id="Q9XIN7"/>
<dbReference type="IntAct" id="Q9XIN7">
    <property type="interactions" value="5"/>
</dbReference>
<dbReference type="STRING" id="3702.Q9XIN7"/>
<dbReference type="PaxDb" id="3702-AT2G27300.1"/>
<dbReference type="ProteomicsDB" id="248924"/>
<dbReference type="EnsemblPlants" id="AT2G27300.1">
    <property type="protein sequence ID" value="AT2G27300.1"/>
    <property type="gene ID" value="AT2G27300"/>
</dbReference>
<dbReference type="GeneID" id="817273"/>
<dbReference type="Gramene" id="AT2G27300.1">
    <property type="protein sequence ID" value="AT2G27300.1"/>
    <property type="gene ID" value="AT2G27300"/>
</dbReference>
<dbReference type="KEGG" id="ath:AT2G27300"/>
<dbReference type="Araport" id="AT2G27300"/>
<dbReference type="TAIR" id="AT2G27300">
    <property type="gene designation" value="NTL8"/>
</dbReference>
<dbReference type="eggNOG" id="ENOG502QRAU">
    <property type="taxonomic scope" value="Eukaryota"/>
</dbReference>
<dbReference type="HOGENOM" id="CLU_035664_18_0_1"/>
<dbReference type="InParanoid" id="Q9XIN7"/>
<dbReference type="OMA" id="VCEQDKE"/>
<dbReference type="PhylomeDB" id="Q9XIN7"/>
<dbReference type="PRO" id="PR:Q9XIN7"/>
<dbReference type="Proteomes" id="UP000006548">
    <property type="component" value="Chromosome 2"/>
</dbReference>
<dbReference type="ExpressionAtlas" id="Q9XIN7">
    <property type="expression patterns" value="baseline and differential"/>
</dbReference>
<dbReference type="GO" id="GO:0005634">
    <property type="term" value="C:nucleus"/>
    <property type="evidence" value="ECO:0000314"/>
    <property type="project" value="UniProtKB"/>
</dbReference>
<dbReference type="GO" id="GO:0005886">
    <property type="term" value="C:plasma membrane"/>
    <property type="evidence" value="ECO:0000314"/>
    <property type="project" value="UniProtKB"/>
</dbReference>
<dbReference type="GO" id="GO:0003700">
    <property type="term" value="F:DNA-binding transcription factor activity"/>
    <property type="evidence" value="ECO:0000250"/>
    <property type="project" value="TAIR"/>
</dbReference>
<dbReference type="GO" id="GO:0043565">
    <property type="term" value="F:sequence-specific DNA binding"/>
    <property type="evidence" value="ECO:0000314"/>
    <property type="project" value="TAIR"/>
</dbReference>
<dbReference type="GO" id="GO:0000976">
    <property type="term" value="F:transcription cis-regulatory region binding"/>
    <property type="evidence" value="ECO:0000353"/>
    <property type="project" value="TAIR"/>
</dbReference>
<dbReference type="GO" id="GO:0071472">
    <property type="term" value="P:cellular response to salt stress"/>
    <property type="evidence" value="ECO:0000315"/>
    <property type="project" value="UniProtKB"/>
</dbReference>
<dbReference type="GO" id="GO:0009908">
    <property type="term" value="P:flower development"/>
    <property type="evidence" value="ECO:0007669"/>
    <property type="project" value="UniProtKB-KW"/>
</dbReference>
<dbReference type="GO" id="GO:0009740">
    <property type="term" value="P:gibberellic acid mediated signaling pathway"/>
    <property type="evidence" value="ECO:0007669"/>
    <property type="project" value="UniProtKB-KW"/>
</dbReference>
<dbReference type="GO" id="GO:0033619">
    <property type="term" value="P:membrane protein proteolysis"/>
    <property type="evidence" value="ECO:0000314"/>
    <property type="project" value="UniProtKB"/>
</dbReference>
<dbReference type="GO" id="GO:0009938">
    <property type="term" value="P:negative regulation of gibberellic acid mediated signaling pathway"/>
    <property type="evidence" value="ECO:0000315"/>
    <property type="project" value="UniProtKB"/>
</dbReference>
<dbReference type="GO" id="GO:0048573">
    <property type="term" value="P:photoperiodism, flowering"/>
    <property type="evidence" value="ECO:0000315"/>
    <property type="project" value="UniProtKB"/>
</dbReference>
<dbReference type="GO" id="GO:0045893">
    <property type="term" value="P:positive regulation of DNA-templated transcription"/>
    <property type="evidence" value="ECO:0000314"/>
    <property type="project" value="TAIR"/>
</dbReference>
<dbReference type="GO" id="GO:2000039">
    <property type="term" value="P:regulation of trichome morphogenesis"/>
    <property type="evidence" value="ECO:0000315"/>
    <property type="project" value="TAIR"/>
</dbReference>
<dbReference type="GO" id="GO:0009739">
    <property type="term" value="P:response to gibberellin"/>
    <property type="evidence" value="ECO:0000314"/>
    <property type="project" value="UniProtKB"/>
</dbReference>
<dbReference type="GO" id="GO:0009651">
    <property type="term" value="P:response to salt stress"/>
    <property type="evidence" value="ECO:0000315"/>
    <property type="project" value="TAIR"/>
</dbReference>
<dbReference type="GO" id="GO:0009845">
    <property type="term" value="P:seed germination"/>
    <property type="evidence" value="ECO:0000314"/>
    <property type="project" value="UniProtKB"/>
</dbReference>
<dbReference type="FunFam" id="2.170.150.80:FF:000006">
    <property type="entry name" value="NAC domain-containing protein 100-like"/>
    <property type="match status" value="1"/>
</dbReference>
<dbReference type="Gene3D" id="2.170.150.80">
    <property type="entry name" value="NAC domain"/>
    <property type="match status" value="1"/>
</dbReference>
<dbReference type="InterPro" id="IPR003441">
    <property type="entry name" value="NAC-dom"/>
</dbReference>
<dbReference type="InterPro" id="IPR036093">
    <property type="entry name" value="NAC_dom_sf"/>
</dbReference>
<dbReference type="PANTHER" id="PTHR31744:SF210">
    <property type="entry name" value="NAC DOMAIN-CONTAINING PROTEIN 86-LIKE"/>
    <property type="match status" value="1"/>
</dbReference>
<dbReference type="PANTHER" id="PTHR31744">
    <property type="entry name" value="PROTEIN CUP-SHAPED COTYLEDON 2-RELATED"/>
    <property type="match status" value="1"/>
</dbReference>
<dbReference type="Pfam" id="PF02365">
    <property type="entry name" value="NAM"/>
    <property type="match status" value="1"/>
</dbReference>
<dbReference type="SUPFAM" id="SSF101941">
    <property type="entry name" value="NAC domain"/>
    <property type="match status" value="1"/>
</dbReference>
<dbReference type="PROSITE" id="PS51005">
    <property type="entry name" value="NAC"/>
    <property type="match status" value="1"/>
</dbReference>
<keyword id="KW-0010">Activator</keyword>
<keyword id="KW-1003">Cell membrane</keyword>
<keyword id="KW-0238">DNA-binding</keyword>
<keyword id="KW-0287">Flowering</keyword>
<keyword id="KW-0939">Gibberellin signaling pathway</keyword>
<keyword id="KW-0472">Membrane</keyword>
<keyword id="KW-0539">Nucleus</keyword>
<keyword id="KW-1185">Reference proteome</keyword>
<keyword id="KW-0346">Stress response</keyword>
<keyword id="KW-0804">Transcription</keyword>
<keyword id="KW-0805">Transcription regulation</keyword>
<keyword id="KW-0812">Transmembrane</keyword>
<keyword id="KW-1133">Transmembrane helix</keyword>
<accession>Q9XIN7</accession>
<feature type="chain" id="PRO_0000431527" description="NAC domain-containing protein 40">
    <location>
        <begin position="1"/>
        <end position="335"/>
    </location>
</feature>
<feature type="transmembrane region" description="Helical" evidence="1">
    <location>
        <begin position="313"/>
        <end position="333"/>
    </location>
</feature>
<feature type="domain" description="NAC" evidence="2">
    <location>
        <begin position="14"/>
        <end position="156"/>
    </location>
</feature>
<feature type="DNA-binding region" evidence="2">
    <location>
        <begin position="112"/>
        <end position="162"/>
    </location>
</feature>
<feature type="region of interest" description="Disordered" evidence="3">
    <location>
        <begin position="245"/>
        <end position="267"/>
    </location>
</feature>
<feature type="compositionally biased region" description="Polar residues" evidence="3">
    <location>
        <begin position="245"/>
        <end position="254"/>
    </location>
</feature>
<evidence type="ECO:0000255" key="1"/>
<evidence type="ECO:0000255" key="2">
    <source>
        <dbReference type="PROSITE-ProRule" id="PRU00353"/>
    </source>
</evidence>
<evidence type="ECO:0000256" key="3">
    <source>
        <dbReference type="SAM" id="MobiDB-lite"/>
    </source>
</evidence>
<evidence type="ECO:0000269" key="4">
    <source>
    </source>
</evidence>
<evidence type="ECO:0000269" key="5">
    <source>
    </source>
</evidence>
<evidence type="ECO:0000269" key="6">
    <source>
    </source>
</evidence>
<evidence type="ECO:0000269" key="7">
    <source>
    </source>
</evidence>
<evidence type="ECO:0000269" key="8">
    <source>
    </source>
</evidence>
<evidence type="ECO:0000303" key="9">
    <source>
    </source>
</evidence>
<evidence type="ECO:0000303" key="10">
    <source>
    </source>
</evidence>
<evidence type="ECO:0000312" key="11">
    <source>
        <dbReference type="Araport" id="AT2G27300"/>
    </source>
</evidence>
<evidence type="ECO:0000312" key="12">
    <source>
        <dbReference type="EMBL" id="AAD41999.1"/>
    </source>
</evidence>
<protein>
    <recommendedName>
        <fullName evidence="9">NAC domain-containing protein 40</fullName>
        <shortName evidence="9">ANAC040</shortName>
    </recommendedName>
    <alternativeName>
        <fullName evidence="10">Protein NTM1-like 8</fullName>
    </alternativeName>
</protein>
<reference key="1">
    <citation type="journal article" date="1999" name="Nature">
        <title>Sequence and analysis of chromosome 2 of the plant Arabidopsis thaliana.</title>
        <authorList>
            <person name="Lin X."/>
            <person name="Kaul S."/>
            <person name="Rounsley S.D."/>
            <person name="Shea T.P."/>
            <person name="Benito M.-I."/>
            <person name="Town C.D."/>
            <person name="Fujii C.Y."/>
            <person name="Mason T.M."/>
            <person name="Bowman C.L."/>
            <person name="Barnstead M.E."/>
            <person name="Feldblyum T.V."/>
            <person name="Buell C.R."/>
            <person name="Ketchum K.A."/>
            <person name="Lee J.J."/>
            <person name="Ronning C.M."/>
            <person name="Koo H.L."/>
            <person name="Moffat K.S."/>
            <person name="Cronin L.A."/>
            <person name="Shen M."/>
            <person name="Pai G."/>
            <person name="Van Aken S."/>
            <person name="Umayam L."/>
            <person name="Tallon L.J."/>
            <person name="Gill J.E."/>
            <person name="Adams M.D."/>
            <person name="Carrera A.J."/>
            <person name="Creasy T.H."/>
            <person name="Goodman H.M."/>
            <person name="Somerville C.R."/>
            <person name="Copenhaver G.P."/>
            <person name="Preuss D."/>
            <person name="Nierman W.C."/>
            <person name="White O."/>
            <person name="Eisen J.A."/>
            <person name="Salzberg S.L."/>
            <person name="Fraser C.M."/>
            <person name="Venter J.C."/>
        </authorList>
    </citation>
    <scope>NUCLEOTIDE SEQUENCE [LARGE SCALE GENOMIC DNA]</scope>
    <source>
        <strain>cv. Columbia</strain>
    </source>
</reference>
<reference key="2">
    <citation type="journal article" date="2017" name="Plant J.">
        <title>Araport11: a complete reannotation of the Arabidopsis thaliana reference genome.</title>
        <authorList>
            <person name="Cheng C.Y."/>
            <person name="Krishnakumar V."/>
            <person name="Chan A.P."/>
            <person name="Thibaud-Nissen F."/>
            <person name="Schobel S."/>
            <person name="Town C.D."/>
        </authorList>
    </citation>
    <scope>GENOME REANNOTATION</scope>
    <source>
        <strain>cv. Columbia</strain>
    </source>
</reference>
<reference key="3">
    <citation type="submission" date="2005-05" db="EMBL/GenBank/DDBJ databases">
        <authorList>
            <person name="Underwood B.A."/>
            <person name="Xiao Y.-L."/>
            <person name="Moskal W.A. Jr."/>
            <person name="Monaghan E.L."/>
            <person name="Wang W."/>
            <person name="Redman J.C."/>
            <person name="Wu H.C."/>
            <person name="Utterback T."/>
            <person name="Town C.D."/>
        </authorList>
    </citation>
    <scope>NUCLEOTIDE SEQUENCE [LARGE SCALE MRNA]</scope>
    <source>
        <strain>cv. Columbia</strain>
    </source>
</reference>
<reference key="4">
    <citation type="submission" date="2006-09" db="EMBL/GenBank/DDBJ databases">
        <title>Arabidopsis ORF clones.</title>
        <authorList>
            <person name="Quinitio C."/>
            <person name="Chen H."/>
            <person name="Kim C.J."/>
            <person name="Shinn P."/>
            <person name="Ecker J.R."/>
        </authorList>
    </citation>
    <scope>NUCLEOTIDE SEQUENCE [LARGE SCALE MRNA]</scope>
    <source>
        <strain>cv. Columbia</strain>
    </source>
</reference>
<reference key="5">
    <citation type="journal article" date="2003" name="DNA Res.">
        <title>Comprehensive analysis of NAC family genes in Oryza sativa and Arabidopsis thaliana.</title>
        <authorList>
            <person name="Ooka H."/>
            <person name="Satoh K."/>
            <person name="Doi K."/>
            <person name="Nagata T."/>
            <person name="Otomo Y."/>
            <person name="Murakami K."/>
            <person name="Matsubara K."/>
            <person name="Osato N."/>
            <person name="Kawai J."/>
            <person name="Carninci P."/>
            <person name="Hayashizaki Y."/>
            <person name="Suzuki K."/>
            <person name="Kojima K."/>
            <person name="Takahara Y."/>
            <person name="Yamamoto K."/>
            <person name="Kikuchi S."/>
        </authorList>
    </citation>
    <scope>GENE FAMILY</scope>
    <scope>NOMENCLATURE</scope>
</reference>
<reference key="6">
    <citation type="journal article" date="2007" name="Nucleic Acids Res.">
        <title>Exploring membrane-associated NAC transcription factors in Arabidopsis: implications for membrane biology in genome regulation.</title>
        <authorList>
            <person name="Kim S.Y."/>
            <person name="Kim S.G."/>
            <person name="Kim Y.S."/>
            <person name="Seo P.J."/>
            <person name="Bae M."/>
            <person name="Yoon H.K."/>
            <person name="Park C.M."/>
        </authorList>
    </citation>
    <scope>GENE FAMILY</scope>
    <scope>NOMENCLATURE</scope>
    <scope>TISSUE SPECIFICITY</scope>
    <scope>INDUCTION</scope>
</reference>
<reference key="7">
    <citation type="journal article" date="2007" name="Plant Signal. Behav.">
        <title>Membrane-mediated salt stress signaling in flowering time control.</title>
        <authorList>
            <person name="Kim S.-G."/>
            <person name="Park C.-M."/>
        </authorList>
    </citation>
    <scope>FUNCTION</scope>
    <scope>DISRUPTION PHENOTYPE</scope>
    <scope>INDUCTION BY SALT AND IMBIBITION</scope>
    <scope>SUBCELLULAR LOCATION</scope>
    <scope>DEVELOPMENTAL STAGE</scope>
    <scope>PROTEOLYTIC CLEAVAGE</scope>
</reference>
<reference key="8">
    <citation type="journal article" date="2007" name="Planta">
        <title>A membrane-associated NAC transcription factor regulates salt-responsive flowering via FLOWERING LOCUS T in Arabidopsis.</title>
        <authorList>
            <person name="Kim S.-G."/>
            <person name="Kim S.-Y."/>
            <person name="Park C.-M."/>
        </authorList>
    </citation>
    <scope>FUNCTION</scope>
    <scope>DISRUPTION PHENOTYPE</scope>
    <scope>SUBCELLULAR LOCATION</scope>
    <scope>INDUCTION BY SALT</scope>
    <scope>TISSUE SPECIFICITY</scope>
    <scope>DEVELOPMENTAL STAGE</scope>
    <scope>PROTEOLYTIC CLEAVAGE</scope>
    <source>
        <strain>cv. Columbia</strain>
    </source>
</reference>
<reference key="9">
    <citation type="journal article" date="2008" name="Plant J.">
        <title>A membrane-bound NAC transcription factor NTL8 regulates gibberellic acid-mediated salt signaling in Arabidopsis seed germination.</title>
        <authorList>
            <person name="Kim S.-G."/>
            <person name="Lee A.-K."/>
            <person name="Yoon H.-K."/>
            <person name="Park C.-M."/>
        </authorList>
    </citation>
    <scope>FUNCTION</scope>
    <scope>DISRUPTION PHENOTYPE</scope>
    <scope>INDUCTION BY SALT AND GIBBERELLIC ACID</scope>
    <scope>SUBCELLULAR LOCATION</scope>
    <scope>PROTEOLYTIC CLEAVAGE</scope>
</reference>
<reference key="10">
    <citation type="journal article" date="2008" name="Plant Signal. Behav.">
        <title>Gibberellic acid-mediated salt signaling in seed germination.</title>
        <authorList>
            <person name="Kim S.-G."/>
            <person name="Park C.-M."/>
        </authorList>
    </citation>
    <scope>FUNCTION</scope>
    <scope>INDUCTION BY SALT AND IMBIBITION</scope>
</reference>
<name>NAC40_ARATH</name>
<gene>
    <name evidence="10" type="primary">NTL8</name>
    <name evidence="11" type="ordered locus">At2g27300</name>
    <name evidence="12" type="ORF">F12K2.12</name>
</gene>
<comment type="function">
    <text evidence="5 6 7 8">Transcriptional activator activated by proteolytic cleavage through regulated intramembrane proteolysis (RIP), probably via metalloprotease activity. Regulates gibberellic acid-mediated salt-responsive repression of seed germination and flowering via FT, thus delaying seed germination under high salinity conditions.</text>
</comment>
<comment type="subcellular location">
    <subcellularLocation>
        <location evidence="5 6 8">Cell membrane</location>
        <topology evidence="1">Single-pass membrane protein</topology>
    </subcellularLocation>
    <subcellularLocation>
        <location evidence="2 5 6 8">Nucleus</location>
    </subcellularLocation>
    <text evidence="5 6 8">Localized primarily in plasma membrane as dormant form and, upon salt stress, is processed into a transcriptionally active and nuclear form after a proteolytic cleavage through regulated intramembrane proteolysis (RIP).</text>
</comment>
<comment type="tissue specificity">
    <text evidence="4 5">Expressed in seeds, leaves, roots and inflorescence (PubMed:17410378). Expressed in roots, rosette leaves, cauline leaves, shoot apex, stems and flowers (PubMed:17158162).</text>
</comment>
<comment type="developmental stage">
    <text evidence="5 8">Accumulates in imbibed seeds (PubMed:19704545). Detected in early stages of seed development, especially in the basal tip of immature embryo. Particularly expressed in vascular tissues of inflorescence stems, roots, leaves and petioles (PubMed:17410378).</text>
</comment>
<comment type="induction">
    <text evidence="4 5 6 7 8">By high salt stress (PubMed:17410378, PubMed:18363782, PubMed:19704528, PubMed:19704545). Repressed by gibberellic acid (GA), but induced by the GA biosynthetic inhibitor paclabutrazol (PAC) (PubMed:18363782). Accumulates transiently in seeds upon imbibition (PubMed:17410378, PubMed:18363782, PubMed:19704528, PubMed:19704545). Induced by drought stress (PubMed:17158162).</text>
</comment>
<comment type="domain">
    <text evidence="2">The NAC domain includes a DNA binding domain and a dimerization domain.</text>
</comment>
<comment type="PTM">
    <text evidence="5 6 8">Proteolytically cleaved, probably by metalloprotease activity. This cleavage mediates a translocation from the plasma membrane to the nucleus.</text>
</comment>
<comment type="disruption phenotype">
    <text evidence="5 6 8">In ntl8-1, no discernible phenotypic changes except slight differences in lateral root growth and flowering time, as well as reduced lateral root growth rate. Insensitive to high salt.</text>
</comment>